<gene>
    <name evidence="1" type="primary">rplW</name>
    <name type="ordered locus">Clos_0494</name>
</gene>
<comment type="function">
    <text evidence="1">One of the early assembly proteins it binds 23S rRNA. One of the proteins that surrounds the polypeptide exit tunnel on the outside of the ribosome. Forms the main docking site for trigger factor binding to the ribosome.</text>
</comment>
<comment type="subunit">
    <text evidence="1">Part of the 50S ribosomal subunit. Contacts protein L29, and trigger factor when it is bound to the ribosome.</text>
</comment>
<comment type="similarity">
    <text evidence="1">Belongs to the universal ribosomal protein uL23 family.</text>
</comment>
<organism>
    <name type="scientific">Alkaliphilus oremlandii (strain OhILAs)</name>
    <name type="common">Clostridium oremlandii (strain OhILAs)</name>
    <dbReference type="NCBI Taxonomy" id="350688"/>
    <lineage>
        <taxon>Bacteria</taxon>
        <taxon>Bacillati</taxon>
        <taxon>Bacillota</taxon>
        <taxon>Clostridia</taxon>
        <taxon>Peptostreptococcales</taxon>
        <taxon>Natronincolaceae</taxon>
        <taxon>Alkaliphilus</taxon>
    </lineage>
</organism>
<sequence>MTNPHDIIIKPIITENSMDDMASKKYTFAVNKKANKIQVKQAVEAVFGVKVEKVNTMNMIGKVKRMGAKEGKRADWKKAIVTLRPDSKEIEFFEGM</sequence>
<feature type="chain" id="PRO_1000068036" description="Large ribosomal subunit protein uL23">
    <location>
        <begin position="1"/>
        <end position="96"/>
    </location>
</feature>
<keyword id="KW-1185">Reference proteome</keyword>
<keyword id="KW-0687">Ribonucleoprotein</keyword>
<keyword id="KW-0689">Ribosomal protein</keyword>
<keyword id="KW-0694">RNA-binding</keyword>
<keyword id="KW-0699">rRNA-binding</keyword>
<protein>
    <recommendedName>
        <fullName evidence="1">Large ribosomal subunit protein uL23</fullName>
    </recommendedName>
    <alternativeName>
        <fullName evidence="2">50S ribosomal protein L23</fullName>
    </alternativeName>
</protein>
<proteinExistence type="inferred from homology"/>
<accession>A8MLE2</accession>
<dbReference type="EMBL" id="CP000853">
    <property type="protein sequence ID" value="ABW18056.1"/>
    <property type="molecule type" value="Genomic_DNA"/>
</dbReference>
<dbReference type="RefSeq" id="WP_012158370.1">
    <property type="nucleotide sequence ID" value="NC_009922.1"/>
</dbReference>
<dbReference type="SMR" id="A8MLE2"/>
<dbReference type="STRING" id="350688.Clos_0494"/>
<dbReference type="KEGG" id="aoe:Clos_0494"/>
<dbReference type="eggNOG" id="COG0089">
    <property type="taxonomic scope" value="Bacteria"/>
</dbReference>
<dbReference type="HOGENOM" id="CLU_037562_3_2_9"/>
<dbReference type="OrthoDB" id="9793353at2"/>
<dbReference type="Proteomes" id="UP000000269">
    <property type="component" value="Chromosome"/>
</dbReference>
<dbReference type="GO" id="GO:1990904">
    <property type="term" value="C:ribonucleoprotein complex"/>
    <property type="evidence" value="ECO:0007669"/>
    <property type="project" value="UniProtKB-KW"/>
</dbReference>
<dbReference type="GO" id="GO:0005840">
    <property type="term" value="C:ribosome"/>
    <property type="evidence" value="ECO:0007669"/>
    <property type="project" value="UniProtKB-KW"/>
</dbReference>
<dbReference type="GO" id="GO:0019843">
    <property type="term" value="F:rRNA binding"/>
    <property type="evidence" value="ECO:0007669"/>
    <property type="project" value="UniProtKB-UniRule"/>
</dbReference>
<dbReference type="GO" id="GO:0003735">
    <property type="term" value="F:structural constituent of ribosome"/>
    <property type="evidence" value="ECO:0007669"/>
    <property type="project" value="InterPro"/>
</dbReference>
<dbReference type="GO" id="GO:0006412">
    <property type="term" value="P:translation"/>
    <property type="evidence" value="ECO:0007669"/>
    <property type="project" value="UniProtKB-UniRule"/>
</dbReference>
<dbReference type="FunFam" id="3.30.70.330:FF:000001">
    <property type="entry name" value="50S ribosomal protein L23"/>
    <property type="match status" value="1"/>
</dbReference>
<dbReference type="Gene3D" id="3.30.70.330">
    <property type="match status" value="1"/>
</dbReference>
<dbReference type="HAMAP" id="MF_01369_B">
    <property type="entry name" value="Ribosomal_uL23_B"/>
    <property type="match status" value="1"/>
</dbReference>
<dbReference type="InterPro" id="IPR012677">
    <property type="entry name" value="Nucleotide-bd_a/b_plait_sf"/>
</dbReference>
<dbReference type="InterPro" id="IPR013025">
    <property type="entry name" value="Ribosomal_uL23-like"/>
</dbReference>
<dbReference type="InterPro" id="IPR012678">
    <property type="entry name" value="Ribosomal_uL23/eL15/eS24_sf"/>
</dbReference>
<dbReference type="NCBIfam" id="NF004363">
    <property type="entry name" value="PRK05738.2-4"/>
    <property type="match status" value="1"/>
</dbReference>
<dbReference type="PANTHER" id="PTHR11620">
    <property type="entry name" value="60S RIBOSOMAL PROTEIN L23A"/>
    <property type="match status" value="1"/>
</dbReference>
<dbReference type="Pfam" id="PF00276">
    <property type="entry name" value="Ribosomal_L23"/>
    <property type="match status" value="1"/>
</dbReference>
<dbReference type="SUPFAM" id="SSF54189">
    <property type="entry name" value="Ribosomal proteins S24e, L23 and L15e"/>
    <property type="match status" value="1"/>
</dbReference>
<evidence type="ECO:0000255" key="1">
    <source>
        <dbReference type="HAMAP-Rule" id="MF_01369"/>
    </source>
</evidence>
<evidence type="ECO:0000305" key="2"/>
<name>RL23_ALKOO</name>
<reference key="1">
    <citation type="submission" date="2007-10" db="EMBL/GenBank/DDBJ databases">
        <title>Complete genome of Alkaliphilus oremlandii OhILAs.</title>
        <authorList>
            <person name="Copeland A."/>
            <person name="Lucas S."/>
            <person name="Lapidus A."/>
            <person name="Barry K."/>
            <person name="Detter J.C."/>
            <person name="Glavina del Rio T."/>
            <person name="Hammon N."/>
            <person name="Israni S."/>
            <person name="Dalin E."/>
            <person name="Tice H."/>
            <person name="Pitluck S."/>
            <person name="Chain P."/>
            <person name="Malfatti S."/>
            <person name="Shin M."/>
            <person name="Vergez L."/>
            <person name="Schmutz J."/>
            <person name="Larimer F."/>
            <person name="Land M."/>
            <person name="Hauser L."/>
            <person name="Kyrpides N."/>
            <person name="Mikhailova N."/>
            <person name="Stolz J.F."/>
            <person name="Dawson A."/>
            <person name="Fisher E."/>
            <person name="Crable B."/>
            <person name="Perera E."/>
            <person name="Lisak J."/>
            <person name="Ranganathan M."/>
            <person name="Basu P."/>
            <person name="Richardson P."/>
        </authorList>
    </citation>
    <scope>NUCLEOTIDE SEQUENCE [LARGE SCALE GENOMIC DNA]</scope>
    <source>
        <strain>OhILAs</strain>
    </source>
</reference>